<sequence>MTNSVYFQLDSVESLIDELPYMYYLGLFFVNVLILYYAFLMEYIVLNVGIVFLPEDMDQALVDLGVLSDPASIPYDTDTELDVFEGYLE</sequence>
<accession>Q6AXJ3</accession>
<name>DEXI_DANRE</name>
<comment type="similarity">
    <text evidence="1">Belongs to the DEXI family.</text>
</comment>
<keyword id="KW-1185">Reference proteome</keyword>
<gene>
    <name type="primary">dexi</name>
    <name type="ORF">zgc:101082</name>
</gene>
<proteinExistence type="inferred from homology"/>
<organism>
    <name type="scientific">Danio rerio</name>
    <name type="common">Zebrafish</name>
    <name type="synonym">Brachydanio rerio</name>
    <dbReference type="NCBI Taxonomy" id="7955"/>
    <lineage>
        <taxon>Eukaryota</taxon>
        <taxon>Metazoa</taxon>
        <taxon>Chordata</taxon>
        <taxon>Craniata</taxon>
        <taxon>Vertebrata</taxon>
        <taxon>Euteleostomi</taxon>
        <taxon>Actinopterygii</taxon>
        <taxon>Neopterygii</taxon>
        <taxon>Teleostei</taxon>
        <taxon>Ostariophysi</taxon>
        <taxon>Cypriniformes</taxon>
        <taxon>Danionidae</taxon>
        <taxon>Danioninae</taxon>
        <taxon>Danio</taxon>
    </lineage>
</organism>
<feature type="chain" id="PRO_0000359750" description="Dexamethasone-induced protein homolog">
    <location>
        <begin position="1"/>
        <end position="89"/>
    </location>
</feature>
<protein>
    <recommendedName>
        <fullName>Dexamethasone-induced protein homolog</fullName>
    </recommendedName>
</protein>
<reference key="1">
    <citation type="submission" date="2004-08" db="EMBL/GenBank/DDBJ databases">
        <authorList>
            <consortium name="NIH - Zebrafish Gene Collection (ZGC) project"/>
        </authorList>
    </citation>
    <scope>NUCLEOTIDE SEQUENCE [LARGE SCALE MRNA]</scope>
    <source>
        <tissue>Embryo</tissue>
    </source>
</reference>
<evidence type="ECO:0000305" key="1"/>
<dbReference type="EMBL" id="BC079513">
    <property type="protein sequence ID" value="AAH79513.1"/>
    <property type="molecule type" value="mRNA"/>
</dbReference>
<dbReference type="RefSeq" id="NP_001003764.1">
    <property type="nucleotide sequence ID" value="NM_001003764.3"/>
</dbReference>
<dbReference type="FunCoup" id="Q6AXJ3">
    <property type="interactions" value="1423"/>
</dbReference>
<dbReference type="STRING" id="7955.ENSDARP00000072301"/>
<dbReference type="PaxDb" id="7955-ENSDARP00000072301"/>
<dbReference type="Ensembl" id="ENSDART00000077835">
    <property type="protein sequence ID" value="ENSDARP00000072301"/>
    <property type="gene ID" value="ENSDARG00000055474"/>
</dbReference>
<dbReference type="GeneID" id="445307"/>
<dbReference type="KEGG" id="dre:445307"/>
<dbReference type="AGR" id="ZFIN:ZDB-GENE-040808-20"/>
<dbReference type="CTD" id="28955"/>
<dbReference type="ZFIN" id="ZDB-GENE-040808-20">
    <property type="gene designation" value="dexi"/>
</dbReference>
<dbReference type="eggNOG" id="ENOG502S66C">
    <property type="taxonomic scope" value="Eukaryota"/>
</dbReference>
<dbReference type="HOGENOM" id="CLU_184633_0_0_1"/>
<dbReference type="InParanoid" id="Q6AXJ3"/>
<dbReference type="OMA" id="IPYMFYL"/>
<dbReference type="OrthoDB" id="9937503at2759"/>
<dbReference type="PhylomeDB" id="Q6AXJ3"/>
<dbReference type="TreeFam" id="TF338557"/>
<dbReference type="PRO" id="PR:Q6AXJ3"/>
<dbReference type="Proteomes" id="UP000000437">
    <property type="component" value="Chromosome 3"/>
</dbReference>
<dbReference type="Bgee" id="ENSDARG00000055474">
    <property type="expression patterns" value="Expressed in mature ovarian follicle and 15 other cell types or tissues"/>
</dbReference>
<dbReference type="InterPro" id="IPR023259">
    <property type="entry name" value="Dexamethasone-induced"/>
</dbReference>
<dbReference type="PANTHER" id="PTHR17070">
    <property type="entry name" value="DEXAMETHASONE-INDUCED PROTEIN"/>
    <property type="match status" value="1"/>
</dbReference>
<dbReference type="PANTHER" id="PTHR17070:SF0">
    <property type="entry name" value="DEXAMETHASONE-INDUCED PROTEIN"/>
    <property type="match status" value="1"/>
</dbReference>
<dbReference type="Pfam" id="PF15198">
    <property type="entry name" value="Dexa_ind"/>
    <property type="match status" value="1"/>
</dbReference>
<dbReference type="PRINTS" id="PR02032">
    <property type="entry name" value="DEXMETHSNEIP"/>
</dbReference>